<name>VKTS1_CONST</name>
<reference key="1">
    <citation type="journal article" date="2006" name="Protein Expr. Purif.">
        <title>Production of recombinant conkunitzin-S1 in Escherichia coli.</title>
        <authorList>
            <person name="Bayrhuber M."/>
            <person name="Graf R."/>
            <person name="Ferber M."/>
            <person name="Zweckstetter M."/>
            <person name="Imperial J."/>
            <person name="Garrett J.E."/>
            <person name="Olivera B.M."/>
            <person name="Terlau H."/>
            <person name="Becker S."/>
        </authorList>
    </citation>
    <scope>NUCLEOTIDE SEQUENCE [MRNA]</scope>
    <source>
        <tissue>Venom duct</tissue>
    </source>
</reference>
<reference key="2">
    <citation type="journal article" date="2005" name="J. Biol. Chem.">
        <title>Conkunitzin-S1 is the first member of a new Kunitz-type neurotoxin family. Structural and functional characterization.</title>
        <authorList>
            <person name="Bayrhuber M."/>
            <person name="Vijayan V."/>
            <person name="Ferber M."/>
            <person name="Graf R."/>
            <person name="Korukottu J."/>
            <person name="Imperial J."/>
            <person name="Garrett J.E."/>
            <person name="Olivera B.M."/>
            <person name="Terlau H."/>
            <person name="Zweckstetter M."/>
            <person name="Becker S."/>
        </authorList>
    </citation>
    <scope>PROTEIN SEQUENCE OF 27-86</scope>
    <scope>DISULFIDE BONDS</scope>
    <scope>AMIDATION AT THR-86</scope>
    <scope>FUNCTION</scope>
    <scope>STRUCTURE BY NMR OF 27-86</scope>
    <source>
        <tissue>Venom</tissue>
    </source>
</reference>
<reference key="3">
    <citation type="journal article" date="2006" name="Acta Crystallogr. D">
        <title>Structure of conkunitzin-S1, a neurotoxin and Kunitz-fold disulfide variant from cone snail.</title>
        <authorList>
            <person name="Dy C.Y."/>
            <person name="Buczek P."/>
            <person name="Imperial J.S."/>
            <person name="Bulaj G."/>
            <person name="Horvath M.P."/>
        </authorList>
    </citation>
    <scope>X-RAY CRYSTALLOGRAPHY (2.45 ANGSTROMS) OF 27-86</scope>
</reference>
<sequence>MEGRRFAAVLILTICMLAPGTGTLLPKDRPSLCDLPADSGSGTKAEKRIYYNSARKQCLRFDYTGQGGNENNFRRTYDCQRTCLYT</sequence>
<dbReference type="PDB" id="1Y62">
    <property type="method" value="X-ray"/>
    <property type="resolution" value="2.45 A"/>
    <property type="chains" value="A/B/C/D/E/F=27-86"/>
</dbReference>
<dbReference type="PDB" id="2CA7">
    <property type="method" value="NMR"/>
    <property type="chains" value="A=27-86"/>
</dbReference>
<dbReference type="PDB" id="6Q61">
    <property type="method" value="X-ray"/>
    <property type="resolution" value="1.30 A"/>
    <property type="chains" value="A=27-86"/>
</dbReference>
<dbReference type="PDB" id="6Q6C">
    <property type="method" value="X-ray"/>
    <property type="resolution" value="1.30 A"/>
    <property type="chains" value="A/B=27-86"/>
</dbReference>
<dbReference type="PDB" id="6YHY">
    <property type="method" value="X-ray"/>
    <property type="resolution" value="1.55 A"/>
    <property type="chains" value="A/B=28-85"/>
</dbReference>
<dbReference type="PDBsum" id="1Y62"/>
<dbReference type="PDBsum" id="2CA7"/>
<dbReference type="PDBsum" id="6Q61"/>
<dbReference type="PDBsum" id="6Q6C"/>
<dbReference type="PDBsum" id="6YHY"/>
<dbReference type="BMRB" id="P0C1X2"/>
<dbReference type="SMR" id="P0C1X2"/>
<dbReference type="EvolutionaryTrace" id="P0C1X2"/>
<dbReference type="GO" id="GO:0005615">
    <property type="term" value="C:extracellular space"/>
    <property type="evidence" value="ECO:0007669"/>
    <property type="project" value="TreeGrafter"/>
</dbReference>
<dbReference type="GO" id="GO:0015459">
    <property type="term" value="F:potassium channel regulator activity"/>
    <property type="evidence" value="ECO:0007669"/>
    <property type="project" value="UniProtKB-KW"/>
</dbReference>
<dbReference type="GO" id="GO:0004867">
    <property type="term" value="F:serine-type endopeptidase inhibitor activity"/>
    <property type="evidence" value="ECO:0007669"/>
    <property type="project" value="UniProtKB-KW"/>
</dbReference>
<dbReference type="GO" id="GO:0090729">
    <property type="term" value="F:toxin activity"/>
    <property type="evidence" value="ECO:0007669"/>
    <property type="project" value="UniProtKB-KW"/>
</dbReference>
<dbReference type="CDD" id="cd22593">
    <property type="entry name" value="Kunitz_conkunitzin"/>
    <property type="match status" value="1"/>
</dbReference>
<dbReference type="Gene3D" id="4.10.410.10">
    <property type="entry name" value="Pancreatic trypsin inhibitor Kunitz domain"/>
    <property type="match status" value="1"/>
</dbReference>
<dbReference type="InterPro" id="IPR002223">
    <property type="entry name" value="Kunitz_BPTI"/>
</dbReference>
<dbReference type="InterPro" id="IPR036880">
    <property type="entry name" value="Kunitz_BPTI_sf"/>
</dbReference>
<dbReference type="InterPro" id="IPR050098">
    <property type="entry name" value="TFPI/VKTCI-like"/>
</dbReference>
<dbReference type="PANTHER" id="PTHR10083:SF374">
    <property type="entry name" value="BPTI_KUNITZ INHIBITOR DOMAIN-CONTAINING PROTEIN"/>
    <property type="match status" value="1"/>
</dbReference>
<dbReference type="PANTHER" id="PTHR10083">
    <property type="entry name" value="KUNITZ-TYPE PROTEASE INHIBITOR-RELATED"/>
    <property type="match status" value="1"/>
</dbReference>
<dbReference type="Pfam" id="PF00014">
    <property type="entry name" value="Kunitz_BPTI"/>
    <property type="match status" value="1"/>
</dbReference>
<dbReference type="PRINTS" id="PR00759">
    <property type="entry name" value="BASICPTASE"/>
</dbReference>
<dbReference type="SMART" id="SM00131">
    <property type="entry name" value="KU"/>
    <property type="match status" value="1"/>
</dbReference>
<dbReference type="SUPFAM" id="SSF57362">
    <property type="entry name" value="BPTI-like"/>
    <property type="match status" value="1"/>
</dbReference>
<dbReference type="PROSITE" id="PS50279">
    <property type="entry name" value="BPTI_KUNITZ_2"/>
    <property type="match status" value="1"/>
</dbReference>
<comment type="function">
    <text evidence="2">Blocks specifically voltage-activated potassium channels (Kv) of the Shaker family (IC(50)=1.33 nM).</text>
</comment>
<comment type="subcellular location">
    <subcellularLocation>
        <location>Secreted</location>
    </subcellularLocation>
</comment>
<comment type="tissue specificity">
    <text>Expressed by the venom duct.</text>
</comment>
<comment type="PTM">
    <text evidence="2">Contains 2 disulfide bonds instead of 3, as for all Kunitz domain proteins. A double Cys-mutant carrying an additional Cys bridge does not show difference in activity with the natural peptide. However, there are some differences in the kinetics of binding of both peptides to the channel (PubMed:15833744).</text>
</comment>
<comment type="similarity">
    <text evidence="3">Belongs to the venom Kunitz-type family.</text>
</comment>
<protein>
    <recommendedName>
        <fullName>Kunitz-type conkunitzin-S1</fullName>
        <shortName>Conk-S1</shortName>
    </recommendedName>
</protein>
<keyword id="KW-0002">3D-structure</keyword>
<keyword id="KW-0027">Amidation</keyword>
<keyword id="KW-0903">Direct protein sequencing</keyword>
<keyword id="KW-1015">Disulfide bond</keyword>
<keyword id="KW-0872">Ion channel impairing toxin</keyword>
<keyword id="KW-0528">Neurotoxin</keyword>
<keyword id="KW-0632">Potassium channel impairing toxin</keyword>
<keyword id="KW-0646">Protease inhibitor</keyword>
<keyword id="KW-0964">Secreted</keyword>
<keyword id="KW-0722">Serine protease inhibitor</keyword>
<keyword id="KW-0732">Signal</keyword>
<keyword id="KW-0800">Toxin</keyword>
<keyword id="KW-1220">Voltage-gated potassium channel impairing toxin</keyword>
<evidence type="ECO:0000255" key="1">
    <source>
        <dbReference type="PROSITE-ProRule" id="PRU00031"/>
    </source>
</evidence>
<evidence type="ECO:0000269" key="2">
    <source>
    </source>
</evidence>
<evidence type="ECO:0000305" key="3"/>
<evidence type="ECO:0007829" key="4">
    <source>
        <dbReference type="PDB" id="6Q61"/>
    </source>
</evidence>
<evidence type="ECO:0007829" key="5">
    <source>
        <dbReference type="PDB" id="6Q6C"/>
    </source>
</evidence>
<feature type="signal peptide" evidence="2">
    <location>
        <begin position="1"/>
        <end position="26"/>
    </location>
</feature>
<feature type="chain" id="PRO_0000249805" description="Kunitz-type conkunitzin-S1" evidence="2">
    <location>
        <begin position="27"/>
        <end position="86"/>
    </location>
</feature>
<feature type="domain" description="BPTI/Kunitz inhibitor" evidence="1">
    <location>
        <begin position="33"/>
        <end position="83"/>
    </location>
</feature>
<feature type="modified residue" description="Threonine amide" evidence="2">
    <location>
        <position position="86"/>
    </location>
</feature>
<feature type="disulfide bond" evidence="1 2">
    <location>
        <begin position="33"/>
        <end position="83"/>
    </location>
</feature>
<feature type="disulfide bond" evidence="1 2">
    <location>
        <begin position="58"/>
        <end position="79"/>
    </location>
</feature>
<feature type="helix" evidence="4">
    <location>
        <begin position="31"/>
        <end position="34"/>
    </location>
</feature>
<feature type="strand" evidence="5">
    <location>
        <begin position="41"/>
        <end position="43"/>
    </location>
</feature>
<feature type="strand" evidence="4">
    <location>
        <begin position="46"/>
        <end position="52"/>
    </location>
</feature>
<feature type="turn" evidence="4">
    <location>
        <begin position="53"/>
        <end position="56"/>
    </location>
</feature>
<feature type="strand" evidence="4">
    <location>
        <begin position="57"/>
        <end position="63"/>
    </location>
</feature>
<feature type="strand" evidence="4">
    <location>
        <begin position="65"/>
        <end position="67"/>
    </location>
</feature>
<feature type="strand" evidence="4">
    <location>
        <begin position="73"/>
        <end position="75"/>
    </location>
</feature>
<feature type="helix" evidence="4">
    <location>
        <begin position="76"/>
        <end position="83"/>
    </location>
</feature>
<proteinExistence type="evidence at protein level"/>
<accession>P0C1X2</accession>
<organism>
    <name type="scientific">Conus striatus</name>
    <name type="common">Striated cone</name>
    <dbReference type="NCBI Taxonomy" id="6493"/>
    <lineage>
        <taxon>Eukaryota</taxon>
        <taxon>Metazoa</taxon>
        <taxon>Spiralia</taxon>
        <taxon>Lophotrochozoa</taxon>
        <taxon>Mollusca</taxon>
        <taxon>Gastropoda</taxon>
        <taxon>Caenogastropoda</taxon>
        <taxon>Neogastropoda</taxon>
        <taxon>Conoidea</taxon>
        <taxon>Conidae</taxon>
        <taxon>Conus</taxon>
        <taxon>Pionoconus</taxon>
    </lineage>
</organism>